<proteinExistence type="inferred from homology"/>
<organism>
    <name type="scientific">Eremothecium gossypii (strain ATCC 10895 / CBS 109.51 / FGSC 9923 / NRRL Y-1056)</name>
    <name type="common">Yeast</name>
    <name type="synonym">Ashbya gossypii</name>
    <dbReference type="NCBI Taxonomy" id="284811"/>
    <lineage>
        <taxon>Eukaryota</taxon>
        <taxon>Fungi</taxon>
        <taxon>Dikarya</taxon>
        <taxon>Ascomycota</taxon>
        <taxon>Saccharomycotina</taxon>
        <taxon>Saccharomycetes</taxon>
        <taxon>Saccharomycetales</taxon>
        <taxon>Saccharomycetaceae</taxon>
        <taxon>Eremothecium</taxon>
    </lineage>
</organism>
<protein>
    <recommendedName>
        <fullName>RNA polymerase II transcription factor B subunit 3</fullName>
    </recommendedName>
    <alternativeName>
        <fullName>RNA polymerase II transcription factor B 38 kDa subunit</fullName>
    </alternativeName>
    <alternativeName>
        <fullName>RNA polymerase II transcription factor B p38 subunit</fullName>
    </alternativeName>
</protein>
<keyword id="KW-0479">Metal-binding</keyword>
<keyword id="KW-0539">Nucleus</keyword>
<keyword id="KW-1185">Reference proteome</keyword>
<keyword id="KW-0804">Transcription</keyword>
<keyword id="KW-0805">Transcription regulation</keyword>
<keyword id="KW-0862">Zinc</keyword>
<keyword id="KW-0863">Zinc-finger</keyword>
<comment type="function">
    <text evidence="1">Acts as a component of the general transcription and DNA repair factor IIH (TFIIH or factor B), which is essential for both basal and activated transcription, and is involved in nucleotide excision repair (NER) of damaged DNA. TFIIH as CTD kinase activity and DNA-dependent ATPase activity, and is essential for polymerase II transcription (By similarity).</text>
</comment>
<comment type="subcellular location">
    <subcellularLocation>
        <location evidence="1">Nucleus</location>
    </subcellularLocation>
</comment>
<feature type="chain" id="PRO_0000055936" description="RNA polymerase II transcription factor B subunit 3">
    <location>
        <begin position="1"/>
        <end position="318"/>
    </location>
</feature>
<feature type="zinc finger region" description="RING-type" evidence="2">
    <location>
        <begin position="10"/>
        <end position="55"/>
    </location>
</feature>
<sequence length="318" mass="37757">MDDDEKKDMCPICKTDRYLSPDMKFLVNPECYHKICESCVDRIFSLGPAQCPYEGCDKILRKNKFKTQIFADVDVEREVDIRKRVFNVFNKTIEDFDGDTAAYDQYLEEVEDIVYGLDNGIDVAKNEEKLRTYEELNKQLILANMERNKQTLENFEQRQKFEKEIKLKKRQLEKQIEDEERANREWVKWEIVNQLTTSEDAEQVIENVKKTVKLKKSSARRKLEELNKVLRNNPYMTISNGRMKKQEHVPFTPFNGDRDRHKRYVIDEESYHDPVVKELQTKKEYIASGFRAEYVYNRVLTEAFMGLGCIIQDELQPS</sequence>
<name>TFB3_EREGS</name>
<dbReference type="EMBL" id="AE016815">
    <property type="protein sequence ID" value="AAS50975.1"/>
    <property type="molecule type" value="Genomic_DNA"/>
</dbReference>
<dbReference type="RefSeq" id="NP_983151.1">
    <property type="nucleotide sequence ID" value="NM_208504.1"/>
</dbReference>
<dbReference type="SMR" id="Q75D20"/>
<dbReference type="FunCoup" id="Q75D20">
    <property type="interactions" value="569"/>
</dbReference>
<dbReference type="STRING" id="284811.Q75D20"/>
<dbReference type="EnsemblFungi" id="AAS50975">
    <property type="protein sequence ID" value="AAS50975"/>
    <property type="gene ID" value="AGOS_ABR202C"/>
</dbReference>
<dbReference type="GeneID" id="4619261"/>
<dbReference type="KEGG" id="ago:AGOS_ABR202C"/>
<dbReference type="eggNOG" id="KOG3800">
    <property type="taxonomic scope" value="Eukaryota"/>
</dbReference>
<dbReference type="HOGENOM" id="CLU_048466_1_1_1"/>
<dbReference type="InParanoid" id="Q75D20"/>
<dbReference type="OMA" id="PNKRDYY"/>
<dbReference type="OrthoDB" id="5963at2759"/>
<dbReference type="Proteomes" id="UP000000591">
    <property type="component" value="Chromosome II"/>
</dbReference>
<dbReference type="GO" id="GO:0005675">
    <property type="term" value="C:transcription factor TFIIH holo complex"/>
    <property type="evidence" value="ECO:0000318"/>
    <property type="project" value="GO_Central"/>
</dbReference>
<dbReference type="GO" id="GO:0070985">
    <property type="term" value="C:transcription factor TFIIK complex"/>
    <property type="evidence" value="ECO:0007669"/>
    <property type="project" value="EnsemblFungi"/>
</dbReference>
<dbReference type="GO" id="GO:0061575">
    <property type="term" value="F:cyclin-dependent protein serine/threonine kinase activator activity"/>
    <property type="evidence" value="ECO:0007669"/>
    <property type="project" value="EnsemblFungi"/>
</dbReference>
<dbReference type="GO" id="GO:0008270">
    <property type="term" value="F:zinc ion binding"/>
    <property type="evidence" value="ECO:0007669"/>
    <property type="project" value="UniProtKB-KW"/>
</dbReference>
<dbReference type="GO" id="GO:0006281">
    <property type="term" value="P:DNA repair"/>
    <property type="evidence" value="ECO:0000318"/>
    <property type="project" value="GO_Central"/>
</dbReference>
<dbReference type="GO" id="GO:0006289">
    <property type="term" value="P:nucleotide-excision repair"/>
    <property type="evidence" value="ECO:0007669"/>
    <property type="project" value="EnsemblFungi"/>
</dbReference>
<dbReference type="GO" id="GO:0006357">
    <property type="term" value="P:regulation of transcription by RNA polymerase II"/>
    <property type="evidence" value="ECO:0000318"/>
    <property type="project" value="GO_Central"/>
</dbReference>
<dbReference type="GO" id="GO:0006367">
    <property type="term" value="P:transcription initiation at RNA polymerase II promoter"/>
    <property type="evidence" value="ECO:0007669"/>
    <property type="project" value="EnsemblFungi"/>
</dbReference>
<dbReference type="CDD" id="cd16573">
    <property type="entry name" value="RING-HC_TFB3-like"/>
    <property type="match status" value="1"/>
</dbReference>
<dbReference type="FunFam" id="3.30.40.10:FF:000037">
    <property type="entry name" value="Cdk-activating kinase assembly factor MAT1, centre"/>
    <property type="match status" value="1"/>
</dbReference>
<dbReference type="Gene3D" id="3.30.40.10">
    <property type="entry name" value="Zinc/RING finger domain, C3HC4 (zinc finger)"/>
    <property type="match status" value="1"/>
</dbReference>
<dbReference type="InterPro" id="IPR015877">
    <property type="entry name" value="Cdk-activating_kinase_MAT1_cen"/>
</dbReference>
<dbReference type="InterPro" id="IPR004575">
    <property type="entry name" value="MAT1/Tfb3"/>
</dbReference>
<dbReference type="InterPro" id="IPR001841">
    <property type="entry name" value="Znf_RING"/>
</dbReference>
<dbReference type="InterPro" id="IPR013083">
    <property type="entry name" value="Znf_RING/FYVE/PHD"/>
</dbReference>
<dbReference type="InterPro" id="IPR017907">
    <property type="entry name" value="Znf_RING_CS"/>
</dbReference>
<dbReference type="NCBIfam" id="TIGR00570">
    <property type="entry name" value="cdk7"/>
    <property type="match status" value="1"/>
</dbReference>
<dbReference type="PANTHER" id="PTHR12683">
    <property type="entry name" value="CDK-ACTIVATING KINASE ASSEMBLY FACTOR MAT1"/>
    <property type="match status" value="1"/>
</dbReference>
<dbReference type="PANTHER" id="PTHR12683:SF13">
    <property type="entry name" value="CDK-ACTIVATING KINASE ASSEMBLY FACTOR MAT1"/>
    <property type="match status" value="1"/>
</dbReference>
<dbReference type="Pfam" id="PF06391">
    <property type="entry name" value="MAT1"/>
    <property type="match status" value="1"/>
</dbReference>
<dbReference type="Pfam" id="PF17121">
    <property type="entry name" value="zf-C3HC4_5"/>
    <property type="match status" value="1"/>
</dbReference>
<dbReference type="PIRSF" id="PIRSF003338">
    <property type="entry name" value="MAT1_metazoa"/>
    <property type="match status" value="1"/>
</dbReference>
<dbReference type="SUPFAM" id="SSF57850">
    <property type="entry name" value="RING/U-box"/>
    <property type="match status" value="1"/>
</dbReference>
<dbReference type="PROSITE" id="PS00518">
    <property type="entry name" value="ZF_RING_1"/>
    <property type="match status" value="1"/>
</dbReference>
<dbReference type="PROSITE" id="PS50089">
    <property type="entry name" value="ZF_RING_2"/>
    <property type="match status" value="1"/>
</dbReference>
<evidence type="ECO:0000250" key="1"/>
<evidence type="ECO:0000255" key="2">
    <source>
        <dbReference type="PROSITE-ProRule" id="PRU00175"/>
    </source>
</evidence>
<reference key="1">
    <citation type="journal article" date="2004" name="Science">
        <title>The Ashbya gossypii genome as a tool for mapping the ancient Saccharomyces cerevisiae genome.</title>
        <authorList>
            <person name="Dietrich F.S."/>
            <person name="Voegeli S."/>
            <person name="Brachat S."/>
            <person name="Lerch A."/>
            <person name="Gates K."/>
            <person name="Steiner S."/>
            <person name="Mohr C."/>
            <person name="Poehlmann R."/>
            <person name="Luedi P."/>
            <person name="Choi S."/>
            <person name="Wing R.A."/>
            <person name="Flavier A."/>
            <person name="Gaffney T.D."/>
            <person name="Philippsen P."/>
        </authorList>
    </citation>
    <scope>NUCLEOTIDE SEQUENCE [LARGE SCALE GENOMIC DNA]</scope>
    <source>
        <strain>ATCC 10895 / CBS 109.51 / FGSC 9923 / NRRL Y-1056</strain>
    </source>
</reference>
<reference key="2">
    <citation type="journal article" date="2013" name="G3 (Bethesda)">
        <title>Genomes of Ashbya fungi isolated from insects reveal four mating-type loci, numerous translocations, lack of transposons, and distinct gene duplications.</title>
        <authorList>
            <person name="Dietrich F.S."/>
            <person name="Voegeli S."/>
            <person name="Kuo S."/>
            <person name="Philippsen P."/>
        </authorList>
    </citation>
    <scope>GENOME REANNOTATION</scope>
    <source>
        <strain>ATCC 10895 / CBS 109.51 / FGSC 9923 / NRRL Y-1056</strain>
    </source>
</reference>
<gene>
    <name type="primary">TFB3</name>
    <name type="ordered locus">ABR202C</name>
</gene>
<accession>Q75D20</accession>